<organism>
    <name type="scientific">Amanita phalloides</name>
    <name type="common">Death cap</name>
    <dbReference type="NCBI Taxonomy" id="67723"/>
    <lineage>
        <taxon>Eukaryota</taxon>
        <taxon>Fungi</taxon>
        <taxon>Dikarya</taxon>
        <taxon>Basidiomycota</taxon>
        <taxon>Agaricomycotina</taxon>
        <taxon>Agaricomycetes</taxon>
        <taxon>Agaricomycetidae</taxon>
        <taxon>Agaricales</taxon>
        <taxon>Pluteineae</taxon>
        <taxon>Amanitaceae</taxon>
        <taxon>Amanita</taxon>
    </lineage>
</organism>
<protein>
    <recommendedName>
        <fullName evidence="4">Phalloidin proprotein</fullName>
    </recommendedName>
    <component>
        <recommendedName>
            <fullName evidence="4">Phalloidin</fullName>
        </recommendedName>
    </component>
</protein>
<feature type="propeptide" id="PRO_0000443789" evidence="6">
    <location>
        <begin position="1"/>
        <end position="10"/>
    </location>
</feature>
<feature type="peptide" id="PRO_0000443790" description="Phalloidin" evidence="6">
    <location>
        <begin position="11"/>
        <end position="17"/>
    </location>
</feature>
<feature type="propeptide" id="PRO_0000443791" evidence="6">
    <location>
        <begin position="18"/>
        <end position="34"/>
    </location>
</feature>
<feature type="cross-link" description="Cyclopeptide (Ala-Pro)" evidence="6">
    <location>
        <begin position="11"/>
        <end position="17"/>
    </location>
</feature>
<feature type="cross-link" description="2'-cysteinyl-6'-hydroxytryptophan sulfoxide (Trp-Cys)" evidence="2">
    <location>
        <begin position="12"/>
        <end position="16"/>
    </location>
</feature>
<proteinExistence type="evidence at protein level"/>
<comment type="function">
    <text evidence="3 6">Toxin that belongs to the bicyclic heptapeptides called phallotoxins (PubMed:27978833). Although structurally related to amatoxins, phallotoxins have a different mode of action, which is the stabilization of F-actin (PubMed:6452160). Phallotoxins are poisonous when administered parenterally, but not orally because of poor absorption (PubMed:27978833).</text>
</comment>
<comment type="PTM">
    <text evidence="1">Processed by the macrocyclase-peptidase enzyme POPB to yield a toxic cyclic heptapeptide (By similarity). POPB first removes 10 residues from the N-terminus (By similarity). Conformational trapping of the remaining peptide forces the enzyme to release this intermediate rather than proceed to macrocyclization (By similarity). The enzyme rebinds the remaining peptide in a different conformation and catalyzes macrocyclization of the N-terminal 7 residues (By similarity).</text>
</comment>
<comment type="similarity">
    <text evidence="5">Belongs to the MSDIN fungal toxin family.</text>
</comment>
<dbReference type="PDB" id="6W17">
    <property type="method" value="EM"/>
    <property type="resolution" value="3.90 A"/>
    <property type="chains" value="M/N/O/P/Q=10-16"/>
</dbReference>
<dbReference type="PDBsum" id="6W17"/>
<dbReference type="EMDB" id="EMD-21502"/>
<dbReference type="SMR" id="P0CU63"/>
<dbReference type="GO" id="GO:0090729">
    <property type="term" value="F:toxin activity"/>
    <property type="evidence" value="ECO:0007669"/>
    <property type="project" value="UniProtKB-KW"/>
</dbReference>
<dbReference type="InterPro" id="IPR027582">
    <property type="entry name" value="Amanitin/phalloidin"/>
</dbReference>
<dbReference type="NCBIfam" id="TIGR04309">
    <property type="entry name" value="amanitin"/>
    <property type="match status" value="1"/>
</dbReference>
<reference key="1">
    <citation type="journal article" date="2016" name="BMC Genomics">
        <title>Expansion and diversification of the MSDIN family of cyclic peptide genes in the poisonous agarics Amanita phalloides and A. bisporigera.</title>
        <authorList>
            <person name="Pulman J.A."/>
            <person name="Childs K.L."/>
            <person name="Sgambelluri R.M."/>
            <person name="Walton J.D."/>
        </authorList>
    </citation>
    <scope>NUCLEOTIDE SEQUENCE [LARGE SCALE GENOMIC DNA]</scope>
    <scope>FUNCTION</scope>
</reference>
<reference key="2">
    <citation type="journal article" date="1981" name="Biochemistry">
        <title>Mechanism of action of phalloidin on the polymerization of muscle actin.</title>
        <authorList>
            <person name="Estes J.E."/>
            <person name="Selden L.A."/>
            <person name="Gershman L.C."/>
        </authorList>
    </citation>
    <scope>FUNCTION</scope>
</reference>
<name>PHAD1_AMAPH</name>
<evidence type="ECO:0000250" key="1">
    <source>
        <dbReference type="UniProtKB" id="A0A067SLB9"/>
    </source>
</evidence>
<evidence type="ECO:0000250" key="2">
    <source>
        <dbReference type="UniProtKB" id="P85421"/>
    </source>
</evidence>
<evidence type="ECO:0000269" key="3">
    <source>
    </source>
</evidence>
<evidence type="ECO:0000303" key="4">
    <source>
    </source>
</evidence>
<evidence type="ECO:0000305" key="5"/>
<evidence type="ECO:0000305" key="6">
    <source>
    </source>
</evidence>
<keyword id="KW-0002">3D-structure</keyword>
<keyword id="KW-0883">Thioether bond</keyword>
<keyword id="KW-0800">Toxin</keyword>
<sequence>MSDINTTCLPAWLATCPCTGDDVNPTLTCGESLC</sequence>
<accession>P0CU63</accession>